<organism>
    <name type="scientific">Rippkaea orientalis (strain PCC 8801 / RF-1)</name>
    <name type="common">Cyanothece sp. (strain PCC 8801)</name>
    <dbReference type="NCBI Taxonomy" id="41431"/>
    <lineage>
        <taxon>Bacteria</taxon>
        <taxon>Bacillati</taxon>
        <taxon>Cyanobacteriota</taxon>
        <taxon>Cyanophyceae</taxon>
        <taxon>Oscillatoriophycideae</taxon>
        <taxon>Chroococcales</taxon>
        <taxon>Aphanothecaceae</taxon>
        <taxon>Rippkaea</taxon>
        <taxon>Rippkaea orientalis</taxon>
    </lineage>
</organism>
<accession>B7K110</accession>
<keyword id="KW-0067">ATP-binding</keyword>
<keyword id="KW-0997">Cell inner membrane</keyword>
<keyword id="KW-1003">Cell membrane</keyword>
<keyword id="KW-0963">Cytoplasm</keyword>
<keyword id="KW-0472">Membrane</keyword>
<keyword id="KW-0547">Nucleotide-binding</keyword>
<keyword id="KW-0653">Protein transport</keyword>
<keyword id="KW-1185">Reference proteome</keyword>
<keyword id="KW-0793">Thylakoid</keyword>
<keyword id="KW-1278">Translocase</keyword>
<keyword id="KW-0811">Translocation</keyword>
<keyword id="KW-0813">Transport</keyword>
<comment type="function">
    <text evidence="1">Part of the Sec protein translocase complex. Interacts with the SecYEG preprotein conducting channel. Has a central role in coupling the hydrolysis of ATP to the transfer of proteins into and across the cell membrane, serving as an ATP-driven molecular motor driving the stepwise translocation of polypeptide chains across the membrane.</text>
</comment>
<comment type="function">
    <text evidence="1">Probably participates in protein translocation into and across both the cytoplasmic and thylakoid membranes in cyanobacterial cells.</text>
</comment>
<comment type="catalytic activity">
    <reaction evidence="1">
        <text>ATP + H2O + cellular proteinSide 1 = ADP + phosphate + cellular proteinSide 2.</text>
        <dbReference type="EC" id="7.4.2.8"/>
    </reaction>
</comment>
<comment type="subunit">
    <text evidence="1">Monomer and homodimer. Part of the essential Sec protein translocation apparatus which comprises SecA, SecYEG and auxiliary proteins SecDF. Other proteins may also be involved.</text>
</comment>
<comment type="subcellular location">
    <subcellularLocation>
        <location evidence="1">Cell inner membrane</location>
        <topology evidence="1">Peripheral membrane protein</topology>
        <orientation evidence="1">Cytoplasmic side</orientation>
    </subcellularLocation>
    <subcellularLocation>
        <location evidence="1">Cellular thylakoid membrane</location>
        <topology evidence="1">Peripheral membrane protein</topology>
        <orientation evidence="1">Cytoplasmic side</orientation>
    </subcellularLocation>
    <subcellularLocation>
        <location evidence="1">Cytoplasm</location>
    </subcellularLocation>
</comment>
<comment type="similarity">
    <text evidence="1">Belongs to the SecA family.</text>
</comment>
<reference key="1">
    <citation type="journal article" date="2011" name="MBio">
        <title>Novel metabolic attributes of the genus Cyanothece, comprising a group of unicellular nitrogen-fixing Cyanobacteria.</title>
        <authorList>
            <person name="Bandyopadhyay A."/>
            <person name="Elvitigala T."/>
            <person name="Welsh E."/>
            <person name="Stockel J."/>
            <person name="Liberton M."/>
            <person name="Min H."/>
            <person name="Sherman L.A."/>
            <person name="Pakrasi H.B."/>
        </authorList>
    </citation>
    <scope>NUCLEOTIDE SEQUENCE [LARGE SCALE GENOMIC DNA]</scope>
    <source>
        <strain>PCC 8801 / RF-1</strain>
    </source>
</reference>
<proteinExistence type="inferred from homology"/>
<gene>
    <name evidence="1" type="primary">secA</name>
    <name type="ordered locus">PCC8801_1077</name>
</gene>
<evidence type="ECO:0000255" key="1">
    <source>
        <dbReference type="HAMAP-Rule" id="MF_01382"/>
    </source>
</evidence>
<evidence type="ECO:0000256" key="2">
    <source>
        <dbReference type="SAM" id="MobiDB-lite"/>
    </source>
</evidence>
<dbReference type="EC" id="7.4.2.8" evidence="1"/>
<dbReference type="EMBL" id="CP001287">
    <property type="protein sequence ID" value="ACK65151.1"/>
    <property type="molecule type" value="Genomic_DNA"/>
</dbReference>
<dbReference type="RefSeq" id="WP_012594426.1">
    <property type="nucleotide sequence ID" value="NC_011726.1"/>
</dbReference>
<dbReference type="SMR" id="B7K110"/>
<dbReference type="STRING" id="41431.PCC8801_1077"/>
<dbReference type="KEGG" id="cyp:PCC8801_1077"/>
<dbReference type="eggNOG" id="COG0653">
    <property type="taxonomic scope" value="Bacteria"/>
</dbReference>
<dbReference type="HOGENOM" id="CLU_005314_3_0_3"/>
<dbReference type="OrthoDB" id="9805579at2"/>
<dbReference type="Proteomes" id="UP000008204">
    <property type="component" value="Chromosome"/>
</dbReference>
<dbReference type="GO" id="GO:0031522">
    <property type="term" value="C:cell envelope Sec protein transport complex"/>
    <property type="evidence" value="ECO:0007669"/>
    <property type="project" value="TreeGrafter"/>
</dbReference>
<dbReference type="GO" id="GO:0005829">
    <property type="term" value="C:cytosol"/>
    <property type="evidence" value="ECO:0007669"/>
    <property type="project" value="TreeGrafter"/>
</dbReference>
<dbReference type="GO" id="GO:0031676">
    <property type="term" value="C:plasma membrane-derived thylakoid membrane"/>
    <property type="evidence" value="ECO:0007669"/>
    <property type="project" value="UniProtKB-SubCell"/>
</dbReference>
<dbReference type="GO" id="GO:0005524">
    <property type="term" value="F:ATP binding"/>
    <property type="evidence" value="ECO:0007669"/>
    <property type="project" value="UniProtKB-UniRule"/>
</dbReference>
<dbReference type="GO" id="GO:0008564">
    <property type="term" value="F:protein-exporting ATPase activity"/>
    <property type="evidence" value="ECO:0007669"/>
    <property type="project" value="UniProtKB-EC"/>
</dbReference>
<dbReference type="GO" id="GO:0065002">
    <property type="term" value="P:intracellular protein transmembrane transport"/>
    <property type="evidence" value="ECO:0007669"/>
    <property type="project" value="UniProtKB-UniRule"/>
</dbReference>
<dbReference type="GO" id="GO:0017038">
    <property type="term" value="P:protein import"/>
    <property type="evidence" value="ECO:0007669"/>
    <property type="project" value="InterPro"/>
</dbReference>
<dbReference type="GO" id="GO:0006605">
    <property type="term" value="P:protein targeting"/>
    <property type="evidence" value="ECO:0007669"/>
    <property type="project" value="UniProtKB-UniRule"/>
</dbReference>
<dbReference type="GO" id="GO:0043952">
    <property type="term" value="P:protein transport by the Sec complex"/>
    <property type="evidence" value="ECO:0007669"/>
    <property type="project" value="TreeGrafter"/>
</dbReference>
<dbReference type="CDD" id="cd17928">
    <property type="entry name" value="DEXDc_SecA"/>
    <property type="match status" value="1"/>
</dbReference>
<dbReference type="CDD" id="cd18803">
    <property type="entry name" value="SF2_C_secA"/>
    <property type="match status" value="1"/>
</dbReference>
<dbReference type="FunFam" id="3.90.1440.10:FF:000003">
    <property type="entry name" value="Preprotein translocase SecA subunit"/>
    <property type="match status" value="1"/>
</dbReference>
<dbReference type="FunFam" id="3.40.50.300:FF:000429">
    <property type="entry name" value="Preprotein translocase subunit SecA"/>
    <property type="match status" value="1"/>
</dbReference>
<dbReference type="FunFam" id="1.10.3060.10:FF:000003">
    <property type="entry name" value="Protein translocase subunit SecA"/>
    <property type="match status" value="1"/>
</dbReference>
<dbReference type="FunFam" id="3.40.50.300:FF:000334">
    <property type="entry name" value="Protein translocase subunit SecA"/>
    <property type="match status" value="1"/>
</dbReference>
<dbReference type="Gene3D" id="1.10.3060.10">
    <property type="entry name" value="Helical scaffold and wing domains of SecA"/>
    <property type="match status" value="1"/>
</dbReference>
<dbReference type="Gene3D" id="3.40.50.300">
    <property type="entry name" value="P-loop containing nucleotide triphosphate hydrolases"/>
    <property type="match status" value="2"/>
</dbReference>
<dbReference type="Gene3D" id="3.90.1440.10">
    <property type="entry name" value="SecA, preprotein cross-linking domain"/>
    <property type="match status" value="1"/>
</dbReference>
<dbReference type="HAMAP" id="MF_01382">
    <property type="entry name" value="SecA"/>
    <property type="match status" value="1"/>
</dbReference>
<dbReference type="InterPro" id="IPR014001">
    <property type="entry name" value="Helicase_ATP-bd"/>
</dbReference>
<dbReference type="InterPro" id="IPR001650">
    <property type="entry name" value="Helicase_C-like"/>
</dbReference>
<dbReference type="InterPro" id="IPR027417">
    <property type="entry name" value="P-loop_NTPase"/>
</dbReference>
<dbReference type="InterPro" id="IPR000185">
    <property type="entry name" value="SecA"/>
</dbReference>
<dbReference type="InterPro" id="IPR020937">
    <property type="entry name" value="SecA_CS"/>
</dbReference>
<dbReference type="InterPro" id="IPR011115">
    <property type="entry name" value="SecA_DEAD"/>
</dbReference>
<dbReference type="InterPro" id="IPR014018">
    <property type="entry name" value="SecA_motor_DEAD"/>
</dbReference>
<dbReference type="InterPro" id="IPR011130">
    <property type="entry name" value="SecA_preprotein_X-link_dom"/>
</dbReference>
<dbReference type="InterPro" id="IPR044722">
    <property type="entry name" value="SecA_SF2_C"/>
</dbReference>
<dbReference type="InterPro" id="IPR011116">
    <property type="entry name" value="SecA_Wing/Scaffold"/>
</dbReference>
<dbReference type="InterPro" id="IPR036266">
    <property type="entry name" value="SecA_Wing/Scaffold_sf"/>
</dbReference>
<dbReference type="InterPro" id="IPR036670">
    <property type="entry name" value="SecA_X-link_sf"/>
</dbReference>
<dbReference type="NCBIfam" id="TIGR00963">
    <property type="entry name" value="secA"/>
    <property type="match status" value="1"/>
</dbReference>
<dbReference type="PANTHER" id="PTHR30612:SF0">
    <property type="entry name" value="CHLOROPLAST PROTEIN-TRANSPORTING ATPASE"/>
    <property type="match status" value="1"/>
</dbReference>
<dbReference type="PANTHER" id="PTHR30612">
    <property type="entry name" value="SECA INNER MEMBRANE COMPONENT OF SEC PROTEIN SECRETION SYSTEM"/>
    <property type="match status" value="1"/>
</dbReference>
<dbReference type="Pfam" id="PF21090">
    <property type="entry name" value="P-loop_SecA"/>
    <property type="match status" value="1"/>
</dbReference>
<dbReference type="Pfam" id="PF07517">
    <property type="entry name" value="SecA_DEAD"/>
    <property type="match status" value="1"/>
</dbReference>
<dbReference type="Pfam" id="PF01043">
    <property type="entry name" value="SecA_PP_bind"/>
    <property type="match status" value="1"/>
</dbReference>
<dbReference type="Pfam" id="PF07516">
    <property type="entry name" value="SecA_SW"/>
    <property type="match status" value="1"/>
</dbReference>
<dbReference type="PRINTS" id="PR00906">
    <property type="entry name" value="SECA"/>
</dbReference>
<dbReference type="SMART" id="SM00957">
    <property type="entry name" value="SecA_DEAD"/>
    <property type="match status" value="1"/>
</dbReference>
<dbReference type="SMART" id="SM00958">
    <property type="entry name" value="SecA_PP_bind"/>
    <property type="match status" value="1"/>
</dbReference>
<dbReference type="SUPFAM" id="SSF81886">
    <property type="entry name" value="Helical scaffold and wing domains of SecA"/>
    <property type="match status" value="1"/>
</dbReference>
<dbReference type="SUPFAM" id="SSF52540">
    <property type="entry name" value="P-loop containing nucleoside triphosphate hydrolases"/>
    <property type="match status" value="2"/>
</dbReference>
<dbReference type="SUPFAM" id="SSF81767">
    <property type="entry name" value="Pre-protein crosslinking domain of SecA"/>
    <property type="match status" value="1"/>
</dbReference>
<dbReference type="PROSITE" id="PS01312">
    <property type="entry name" value="SECA"/>
    <property type="match status" value="1"/>
</dbReference>
<dbReference type="PROSITE" id="PS51196">
    <property type="entry name" value="SECA_MOTOR_DEAD"/>
    <property type="match status" value="1"/>
</dbReference>
<feature type="chain" id="PRO_1000145000" description="Protein translocase subunit SecA">
    <location>
        <begin position="1"/>
        <end position="935"/>
    </location>
</feature>
<feature type="region of interest" description="Disordered" evidence="2">
    <location>
        <begin position="543"/>
        <end position="568"/>
    </location>
</feature>
<feature type="binding site" evidence="1">
    <location>
        <position position="90"/>
    </location>
    <ligand>
        <name>ATP</name>
        <dbReference type="ChEBI" id="CHEBI:30616"/>
    </ligand>
</feature>
<feature type="binding site" evidence="1">
    <location>
        <begin position="108"/>
        <end position="112"/>
    </location>
    <ligand>
        <name>ATP</name>
        <dbReference type="ChEBI" id="CHEBI:30616"/>
    </ligand>
</feature>
<feature type="binding site" evidence="1">
    <location>
        <position position="504"/>
    </location>
    <ligand>
        <name>ATP</name>
        <dbReference type="ChEBI" id="CHEBI:30616"/>
    </ligand>
</feature>
<sequence length="935" mass="106955">MLKTLFGDPNARKLKKFQPFVTEVNLLEEEIQKLSDEELKYKTVEFREALDKARNDEELEDILDEILPEAFAVVREAGIRVLGMRHFDVQLLGGIVLHKGQIAEMKTGEGKTLVATLPAYLNGLTGKGVHVVTVNDYLARRDAEWMGQVHRFLGLSVGLIQGGMNPEERKKNYGCDITYTTNSELGFDYLRDNMATAMAEVVQRPFNYCIIDEVDSILIDEARTPLIISGQVERPTEKYLQAAAIAAQLLKQESEDDPGDYEVDEKARNVLMTDAGFEKAEQLLNVQDLYDQDNPWAHYIFNAIKAKELFTKDVNYMIRNNEIVIVDEFTGRVLPGRRWSDGLHQAIEAKEGVEIQRETQTLATITYQNFFLLYPKLSGMTGTAKTEETELEKVYNLQVTIIPTNRISRRYDLPDVVYKTEDAKWQAVAGEVEELHHQGRPILVGTTSVEKSEVLSKLLQQKKIHHNLLNARPENVERESEIVAQAGRKGAVTIATNMAGRGTDIILGGNADYMARLKIREYLMPQIVMPEDDDLMAGVSGNGGRRPQGFGTSKKKGKNWSPSDADIFPTKMSQETEEILKEAVKFAVEQYGQQSLTELEAEEKIAIASENAPTDDSVVEKLRVVYKAIRKTYETVTDQEHDEVVELGGLHVIGTERHESRRIDNQLRGRAGRQGDPGSTKFFLSLEDNLLRIFGGDRVAGLMNAFRVEEDMPIESQMLTRSLEGAQKKVETFYYDTRKQVFEYDEVMNNQRRAIYAERRRVLEGLDLKEQVLQYAEKTMDEIVDAYVNPELPPEEWDIPNLVGKVKEFVYLLKDVTPQDMEDMTVSEMKIFLHEEVRKAYDIKEYEVDQIRPGLMREAERFFILQQIDTLWREHLQTMDALRESIGLRGYGQQDPLIEYKQEGYEMFLEMMIDIRRNVVYSLFQFQPQGQPQTV</sequence>
<name>SECA_RIPO1</name>
<protein>
    <recommendedName>
        <fullName evidence="1">Protein translocase subunit SecA</fullName>
        <ecNumber evidence="1">7.4.2.8</ecNumber>
    </recommendedName>
</protein>